<keyword id="KW-0028">Amino-acid biosynthesis</keyword>
<keyword id="KW-0032">Aminotransferase</keyword>
<keyword id="KW-0368">Histidine biosynthesis</keyword>
<keyword id="KW-0663">Pyridoxal phosphate</keyword>
<keyword id="KW-1185">Reference proteome</keyword>
<keyword id="KW-0808">Transferase</keyword>
<feature type="chain" id="PRO_0000153418" description="Histidinol-phosphate aminotransferase 2">
    <location>
        <begin position="1"/>
        <end position="369"/>
    </location>
</feature>
<feature type="modified residue" description="N6-(pyridoxal phosphate)lysine" evidence="1">
    <location>
        <position position="229"/>
    </location>
</feature>
<protein>
    <recommendedName>
        <fullName>Histidinol-phosphate aminotransferase 2</fullName>
        <ecNumber>2.6.1.9</ecNumber>
    </recommendedName>
    <alternativeName>
        <fullName>Imidazole acetol-phosphate transaminase 2</fullName>
    </alternativeName>
</protein>
<gene>
    <name type="primary">hisC2</name>
    <name type="ordered locus">PA3165</name>
</gene>
<comment type="catalytic activity">
    <reaction>
        <text>L-histidinol phosphate + 2-oxoglutarate = 3-(imidazol-4-yl)-2-oxopropyl phosphate + L-glutamate</text>
        <dbReference type="Rhea" id="RHEA:23744"/>
        <dbReference type="ChEBI" id="CHEBI:16810"/>
        <dbReference type="ChEBI" id="CHEBI:29985"/>
        <dbReference type="ChEBI" id="CHEBI:57766"/>
        <dbReference type="ChEBI" id="CHEBI:57980"/>
        <dbReference type="EC" id="2.6.1.9"/>
    </reaction>
</comment>
<comment type="cofactor">
    <cofactor evidence="1">
        <name>pyridoxal 5'-phosphate</name>
        <dbReference type="ChEBI" id="CHEBI:597326"/>
    </cofactor>
</comment>
<comment type="pathway">
    <text>Amino-acid biosynthesis; L-histidine biosynthesis; L-histidine from 5-phospho-alpha-D-ribose 1-diphosphate: step 7/9.</text>
</comment>
<comment type="subunit">
    <text evidence="1">Homodimer.</text>
</comment>
<comment type="similarity">
    <text evidence="2">Belongs to the class-II pyridoxal-phosphate-dependent aminotransferase family. Histidinol-phosphate aminotransferase subfamily.</text>
</comment>
<reference key="1">
    <citation type="journal article" date="2000" name="Nature">
        <title>Complete genome sequence of Pseudomonas aeruginosa PAO1, an opportunistic pathogen.</title>
        <authorList>
            <person name="Stover C.K."/>
            <person name="Pham X.-Q.T."/>
            <person name="Erwin A.L."/>
            <person name="Mizoguchi S.D."/>
            <person name="Warrener P."/>
            <person name="Hickey M.J."/>
            <person name="Brinkman F.S.L."/>
            <person name="Hufnagle W.O."/>
            <person name="Kowalik D.J."/>
            <person name="Lagrou M."/>
            <person name="Garber R.L."/>
            <person name="Goltry L."/>
            <person name="Tolentino E."/>
            <person name="Westbrock-Wadman S."/>
            <person name="Yuan Y."/>
            <person name="Brody L.L."/>
            <person name="Coulter S.N."/>
            <person name="Folger K.R."/>
            <person name="Kas A."/>
            <person name="Larbig K."/>
            <person name="Lim R.M."/>
            <person name="Smith K.A."/>
            <person name="Spencer D.H."/>
            <person name="Wong G.K.-S."/>
            <person name="Wu Z."/>
            <person name="Paulsen I.T."/>
            <person name="Reizer J."/>
            <person name="Saier M.H. Jr."/>
            <person name="Hancock R.E.W."/>
            <person name="Lory S."/>
            <person name="Olson M.V."/>
        </authorList>
    </citation>
    <scope>NUCLEOTIDE SEQUENCE [LARGE SCALE GENOMIC DNA]</scope>
    <source>
        <strain>ATCC 15692 / DSM 22644 / CIP 104116 / JCM 14847 / LMG 12228 / 1C / PRS 101 / PAO1</strain>
    </source>
</reference>
<organism>
    <name type="scientific">Pseudomonas aeruginosa (strain ATCC 15692 / DSM 22644 / CIP 104116 / JCM 14847 / LMG 12228 / 1C / PRS 101 / PAO1)</name>
    <dbReference type="NCBI Taxonomy" id="208964"/>
    <lineage>
        <taxon>Bacteria</taxon>
        <taxon>Pseudomonadati</taxon>
        <taxon>Pseudomonadota</taxon>
        <taxon>Gammaproteobacteria</taxon>
        <taxon>Pseudomonadales</taxon>
        <taxon>Pseudomonadaceae</taxon>
        <taxon>Pseudomonas</taxon>
    </lineage>
</organism>
<dbReference type="EC" id="2.6.1.9"/>
<dbReference type="EMBL" id="AE004091">
    <property type="protein sequence ID" value="AAG06553.1"/>
    <property type="molecule type" value="Genomic_DNA"/>
</dbReference>
<dbReference type="PIR" id="F83250">
    <property type="entry name" value="F83250"/>
</dbReference>
<dbReference type="RefSeq" id="NP_251855.1">
    <property type="nucleotide sequence ID" value="NC_002516.2"/>
</dbReference>
<dbReference type="SMR" id="Q9HZ68"/>
<dbReference type="FunCoup" id="Q9HZ68">
    <property type="interactions" value="597"/>
</dbReference>
<dbReference type="STRING" id="208964.PA3165"/>
<dbReference type="PaxDb" id="208964-PA3165"/>
<dbReference type="DNASU" id="882694"/>
<dbReference type="GeneID" id="882694"/>
<dbReference type="KEGG" id="pae:PA3165"/>
<dbReference type="PATRIC" id="fig|208964.12.peg.3308"/>
<dbReference type="PseudoCAP" id="PA3165"/>
<dbReference type="HOGENOM" id="CLU_017584_3_3_6"/>
<dbReference type="InParanoid" id="Q9HZ68"/>
<dbReference type="OrthoDB" id="9813612at2"/>
<dbReference type="PhylomeDB" id="Q9HZ68"/>
<dbReference type="BioCyc" id="PAER208964:G1FZ6-3225-MONOMER"/>
<dbReference type="UniPathway" id="UPA00031">
    <property type="reaction ID" value="UER00012"/>
</dbReference>
<dbReference type="Proteomes" id="UP000002438">
    <property type="component" value="Chromosome"/>
</dbReference>
<dbReference type="GO" id="GO:0004400">
    <property type="term" value="F:histidinol-phosphate transaminase activity"/>
    <property type="evidence" value="ECO:0007669"/>
    <property type="project" value="UniProtKB-UniRule"/>
</dbReference>
<dbReference type="GO" id="GO:0030170">
    <property type="term" value="F:pyridoxal phosphate binding"/>
    <property type="evidence" value="ECO:0007669"/>
    <property type="project" value="InterPro"/>
</dbReference>
<dbReference type="GO" id="GO:0000105">
    <property type="term" value="P:L-histidine biosynthetic process"/>
    <property type="evidence" value="ECO:0007669"/>
    <property type="project" value="UniProtKB-UniRule"/>
</dbReference>
<dbReference type="CDD" id="cd00609">
    <property type="entry name" value="AAT_like"/>
    <property type="match status" value="1"/>
</dbReference>
<dbReference type="Gene3D" id="3.90.1150.10">
    <property type="entry name" value="Aspartate Aminotransferase, domain 1"/>
    <property type="match status" value="1"/>
</dbReference>
<dbReference type="Gene3D" id="3.40.640.10">
    <property type="entry name" value="Type I PLP-dependent aspartate aminotransferase-like (Major domain)"/>
    <property type="match status" value="1"/>
</dbReference>
<dbReference type="HAMAP" id="MF_01023">
    <property type="entry name" value="HisC_aminotrans_2"/>
    <property type="match status" value="1"/>
</dbReference>
<dbReference type="InterPro" id="IPR001917">
    <property type="entry name" value="Aminotrans_II_pyridoxalP_BS"/>
</dbReference>
<dbReference type="InterPro" id="IPR004839">
    <property type="entry name" value="Aminotransferase_I/II_large"/>
</dbReference>
<dbReference type="InterPro" id="IPR005861">
    <property type="entry name" value="HisP_aminotrans"/>
</dbReference>
<dbReference type="InterPro" id="IPR050106">
    <property type="entry name" value="HistidinolP_aminotransfase"/>
</dbReference>
<dbReference type="InterPro" id="IPR015424">
    <property type="entry name" value="PyrdxlP-dep_Trfase"/>
</dbReference>
<dbReference type="InterPro" id="IPR015421">
    <property type="entry name" value="PyrdxlP-dep_Trfase_major"/>
</dbReference>
<dbReference type="InterPro" id="IPR015422">
    <property type="entry name" value="PyrdxlP-dep_Trfase_small"/>
</dbReference>
<dbReference type="NCBIfam" id="TIGR01141">
    <property type="entry name" value="hisC"/>
    <property type="match status" value="1"/>
</dbReference>
<dbReference type="PANTHER" id="PTHR43643:SF3">
    <property type="entry name" value="HISTIDINOL-PHOSPHATE AMINOTRANSFERASE"/>
    <property type="match status" value="1"/>
</dbReference>
<dbReference type="PANTHER" id="PTHR43643">
    <property type="entry name" value="HISTIDINOL-PHOSPHATE AMINOTRANSFERASE 2"/>
    <property type="match status" value="1"/>
</dbReference>
<dbReference type="Pfam" id="PF00155">
    <property type="entry name" value="Aminotran_1_2"/>
    <property type="match status" value="1"/>
</dbReference>
<dbReference type="SUPFAM" id="SSF53383">
    <property type="entry name" value="PLP-dependent transferases"/>
    <property type="match status" value="1"/>
</dbReference>
<dbReference type="PROSITE" id="PS00599">
    <property type="entry name" value="AA_TRANSFER_CLASS_2"/>
    <property type="match status" value="1"/>
</dbReference>
<accession>Q9HZ68</accession>
<name>HIS82_PSEAE</name>
<sequence length="369" mass="39483">MSDFLALAQPGVQKLSPYVPGKPVDELARELGIDPAAIVKLASNENPLGASPKALEAIRAELAELTRYPDGNGFELKRKLAERCAVDAAQVTLGNGSNDILDLVARAYLAPGLNAVFSEHAFAVYPIATQAVGAEGRAVKARAWGHDLEAMLAAIDGQTRVVFVANPNNPTGTWFGADALERFLAQVPAEVLVVLDEAYIEYAEGDELPDGLDYLARHPNLLVSRTFSKAYGLASLRVGYALSSKAVADVLNRVRQPFNVNSLALAAACAALDDHDYLAQSRRLNDSGMAQLEDGFHALGLSWIPSKGNFIAVDLARDAGPVYQALLREGVIVRPVAGYGMPTFLRVSIGLPEENDRFLQALGKVLAHD</sequence>
<evidence type="ECO:0000250" key="1"/>
<evidence type="ECO:0000305" key="2"/>
<proteinExistence type="inferred from homology"/>